<accession>Q9RTI0</accession>
<gene>
    <name type="primary">leuD2</name>
    <name type="ordered locus">DR_1784</name>
</gene>
<organism>
    <name type="scientific">Deinococcus radiodurans (strain ATCC 13939 / DSM 20539 / JCM 16871 / CCUG 27074 / LMG 4051 / NBRC 15346 / NCIMB 9279 / VKM B-1422 / R1)</name>
    <dbReference type="NCBI Taxonomy" id="243230"/>
    <lineage>
        <taxon>Bacteria</taxon>
        <taxon>Thermotogati</taxon>
        <taxon>Deinococcota</taxon>
        <taxon>Deinococci</taxon>
        <taxon>Deinococcales</taxon>
        <taxon>Deinococcaceae</taxon>
        <taxon>Deinococcus</taxon>
    </lineage>
</organism>
<comment type="function">
    <text evidence="1">Catalyzes the isomerization between 2-isopropylmalate and 3-isopropylmalate, via the formation of 2-isopropylmaleate.</text>
</comment>
<comment type="catalytic activity">
    <reaction>
        <text>(2R,3S)-3-isopropylmalate = (2S)-2-isopropylmalate</text>
        <dbReference type="Rhea" id="RHEA:32287"/>
        <dbReference type="ChEBI" id="CHEBI:1178"/>
        <dbReference type="ChEBI" id="CHEBI:35121"/>
        <dbReference type="EC" id="4.2.1.33"/>
    </reaction>
</comment>
<comment type="pathway">
    <text>Amino-acid biosynthesis; L-leucine biosynthesis; L-leucine from 3-methyl-2-oxobutanoate: step 2/4.</text>
</comment>
<comment type="subunit">
    <text evidence="1">Heterodimer of LeuC and LeuD.</text>
</comment>
<comment type="similarity">
    <text evidence="3">Belongs to the LeuD family. LeuD type 2 subfamily.</text>
</comment>
<protein>
    <recommendedName>
        <fullName>3-isopropylmalate dehydratase small subunit 2</fullName>
        <ecNumber>4.2.1.33</ecNumber>
    </recommendedName>
    <alternativeName>
        <fullName>Alpha-IPM isomerase 2</fullName>
        <shortName>IPMI 2</shortName>
    </alternativeName>
    <alternativeName>
        <fullName>Isopropylmalate isomerase 2</fullName>
    </alternativeName>
</protein>
<name>LEUD2_DEIRA</name>
<keyword id="KW-0028">Amino-acid biosynthesis</keyword>
<keyword id="KW-0100">Branched-chain amino acid biosynthesis</keyword>
<keyword id="KW-0432">Leucine biosynthesis</keyword>
<keyword id="KW-0456">Lyase</keyword>
<keyword id="KW-1185">Reference proteome</keyword>
<dbReference type="EC" id="4.2.1.33"/>
<dbReference type="EMBL" id="AE000513">
    <property type="protein sequence ID" value="AAF11332.1"/>
    <property type="molecule type" value="Genomic_DNA"/>
</dbReference>
<dbReference type="PIR" id="F75355">
    <property type="entry name" value="F75355"/>
</dbReference>
<dbReference type="RefSeq" id="NP_295507.1">
    <property type="nucleotide sequence ID" value="NC_001263.1"/>
</dbReference>
<dbReference type="RefSeq" id="WP_010888419.1">
    <property type="nucleotide sequence ID" value="NC_001263.1"/>
</dbReference>
<dbReference type="SMR" id="Q9RTI0"/>
<dbReference type="STRING" id="243230.DR_1784"/>
<dbReference type="PaxDb" id="243230-DR_1784"/>
<dbReference type="EnsemblBacteria" id="AAF11332">
    <property type="protein sequence ID" value="AAF11332"/>
    <property type="gene ID" value="DR_1784"/>
</dbReference>
<dbReference type="GeneID" id="69518023"/>
<dbReference type="KEGG" id="dra:DR_1784"/>
<dbReference type="PATRIC" id="fig|243230.17.peg.1996"/>
<dbReference type="eggNOG" id="COG0066">
    <property type="taxonomic scope" value="Bacteria"/>
</dbReference>
<dbReference type="HOGENOM" id="CLU_081378_1_1_0"/>
<dbReference type="InParanoid" id="Q9RTI0"/>
<dbReference type="OrthoDB" id="9777465at2"/>
<dbReference type="UniPathway" id="UPA00048">
    <property type="reaction ID" value="UER00071"/>
</dbReference>
<dbReference type="Proteomes" id="UP000002524">
    <property type="component" value="Chromosome 1"/>
</dbReference>
<dbReference type="GO" id="GO:0003861">
    <property type="term" value="F:3-isopropylmalate dehydratase activity"/>
    <property type="evidence" value="ECO:0007669"/>
    <property type="project" value="UniProtKB-UniRule"/>
</dbReference>
<dbReference type="GO" id="GO:0009098">
    <property type="term" value="P:L-leucine biosynthetic process"/>
    <property type="evidence" value="ECO:0007669"/>
    <property type="project" value="UniProtKB-UniRule"/>
</dbReference>
<dbReference type="CDD" id="cd01577">
    <property type="entry name" value="IPMI_Swivel"/>
    <property type="match status" value="1"/>
</dbReference>
<dbReference type="Gene3D" id="3.20.19.10">
    <property type="entry name" value="Aconitase, domain 4"/>
    <property type="match status" value="1"/>
</dbReference>
<dbReference type="HAMAP" id="MF_01032">
    <property type="entry name" value="LeuD_type2"/>
    <property type="match status" value="1"/>
</dbReference>
<dbReference type="InterPro" id="IPR015928">
    <property type="entry name" value="Aconitase/3IPM_dehydase_swvl"/>
</dbReference>
<dbReference type="InterPro" id="IPR000573">
    <property type="entry name" value="AconitaseA/IPMdHydase_ssu_swvl"/>
</dbReference>
<dbReference type="InterPro" id="IPR033940">
    <property type="entry name" value="IPMI_Swivel"/>
</dbReference>
<dbReference type="InterPro" id="IPR050075">
    <property type="entry name" value="LeuD"/>
</dbReference>
<dbReference type="InterPro" id="IPR011827">
    <property type="entry name" value="LeuD_type2/HacB/DmdB"/>
</dbReference>
<dbReference type="NCBIfam" id="TIGR02087">
    <property type="entry name" value="LEUD_arch"/>
    <property type="match status" value="1"/>
</dbReference>
<dbReference type="PANTHER" id="PTHR43345:SF2">
    <property type="entry name" value="3-ISOPROPYLMALATE DEHYDRATASE SMALL SUBUNIT 1"/>
    <property type="match status" value="1"/>
</dbReference>
<dbReference type="PANTHER" id="PTHR43345">
    <property type="entry name" value="3-ISOPROPYLMALATE DEHYDRATASE SMALL SUBUNIT 2-RELATED-RELATED"/>
    <property type="match status" value="1"/>
</dbReference>
<dbReference type="Pfam" id="PF00694">
    <property type="entry name" value="Aconitase_C"/>
    <property type="match status" value="1"/>
</dbReference>
<dbReference type="SUPFAM" id="SSF52016">
    <property type="entry name" value="LeuD/IlvD-like"/>
    <property type="match status" value="1"/>
</dbReference>
<evidence type="ECO:0000250" key="1"/>
<evidence type="ECO:0000256" key="2">
    <source>
        <dbReference type="SAM" id="MobiDB-lite"/>
    </source>
</evidence>
<evidence type="ECO:0000305" key="3"/>
<proteinExistence type="inferred from homology"/>
<feature type="chain" id="PRO_0000141924" description="3-isopropylmalate dehydratase small subunit 2">
    <location>
        <begin position="1"/>
        <end position="208"/>
    </location>
</feature>
<feature type="region of interest" description="Disordered" evidence="2">
    <location>
        <begin position="163"/>
        <end position="208"/>
    </location>
</feature>
<sequence>MPTVHVFARDHINTDEIIPARHLTTDVESELAKYAMEDYDKDFVRRVQPGDIIVAGADFGCGSSREHAVWALRGAGVSAVIAPNFARIYYRNSINNGFLALECEGITELFQDGEEAELDLKGGTIRNPRTGKELSFVPVPQFALDVQKAGGWLEYMKAGEDVEGERLDNASTSAGHGHAGTPLGDDPAKEDGPRPEQASGHQKEEHHA</sequence>
<reference key="1">
    <citation type="journal article" date="1999" name="Science">
        <title>Genome sequence of the radioresistant bacterium Deinococcus radiodurans R1.</title>
        <authorList>
            <person name="White O."/>
            <person name="Eisen J.A."/>
            <person name="Heidelberg J.F."/>
            <person name="Hickey E.K."/>
            <person name="Peterson J.D."/>
            <person name="Dodson R.J."/>
            <person name="Haft D.H."/>
            <person name="Gwinn M.L."/>
            <person name="Nelson W.C."/>
            <person name="Richardson D.L."/>
            <person name="Moffat K.S."/>
            <person name="Qin H."/>
            <person name="Jiang L."/>
            <person name="Pamphile W."/>
            <person name="Crosby M."/>
            <person name="Shen M."/>
            <person name="Vamathevan J.J."/>
            <person name="Lam P."/>
            <person name="McDonald L.A."/>
            <person name="Utterback T.R."/>
            <person name="Zalewski C."/>
            <person name="Makarova K.S."/>
            <person name="Aravind L."/>
            <person name="Daly M.J."/>
            <person name="Minton K.W."/>
            <person name="Fleischmann R.D."/>
            <person name="Ketchum K.A."/>
            <person name="Nelson K.E."/>
            <person name="Salzberg S.L."/>
            <person name="Smith H.O."/>
            <person name="Venter J.C."/>
            <person name="Fraser C.M."/>
        </authorList>
    </citation>
    <scope>NUCLEOTIDE SEQUENCE [LARGE SCALE GENOMIC DNA]</scope>
    <source>
        <strain>ATCC 13939 / DSM 20539 / JCM 16871 / CCUG 27074 / LMG 4051 / NBRC 15346 / NCIMB 9279 / VKM B-1422 / R1</strain>
    </source>
</reference>